<evidence type="ECO:0000255" key="1">
    <source>
        <dbReference type="HAMAP-Rule" id="MF_01201"/>
    </source>
</evidence>
<accession>Q72DH4</accession>
<keyword id="KW-0413">Isomerase</keyword>
<keyword id="KW-0663">Pyridoxal phosphate</keyword>
<keyword id="KW-1185">Reference proteome</keyword>
<feature type="chain" id="PRO_1000164592" description="Alanine racemase">
    <location>
        <begin position="1"/>
        <end position="376"/>
    </location>
</feature>
<feature type="active site" description="Proton acceptor; specific for D-alanine" evidence="1">
    <location>
        <position position="36"/>
    </location>
</feature>
<feature type="active site" description="Proton acceptor; specific for L-alanine" evidence="1">
    <location>
        <position position="266"/>
    </location>
</feature>
<feature type="binding site" evidence="1">
    <location>
        <position position="134"/>
    </location>
    <ligand>
        <name>substrate</name>
    </ligand>
</feature>
<feature type="binding site" evidence="1">
    <location>
        <position position="314"/>
    </location>
    <ligand>
        <name>substrate</name>
    </ligand>
</feature>
<feature type="modified residue" description="N6-(pyridoxal phosphate)lysine" evidence="1">
    <location>
        <position position="36"/>
    </location>
</feature>
<sequence length="376" mass="39406">MPISYNKASVVVSLQSIIANYRRIRTVAQRPMPVIKSDAYGHGLEAVGMALEAEGARECAVGTVGEGAKLRKAGFGADIVALLGALDREDAQLAASSGIIPTVLDIAGLERLAAQGTPERPVRVALKFDTGMARLGFTEHDVSALCERLRTLPSVRPVMAVSHLAVADDPTQSAFTMAQGAAFARIMAGLRSNFPDIMGSLSNSAATLAHPQLHWDVQRPGIALYGSNPLRGTALARHGEGLLPAMSVSVPVLQVHPLPAGRSISYGRTYTATKDATVAIIAAGYADNYSRALSGRGVAVAGGRRVPVLGRVCMQTTAIDVTDVPGIATGDRVWLLGGPGPATVSADELADLWGTISYEVLCLLGMNPRRHDDSVE</sequence>
<reference key="1">
    <citation type="journal article" date="2004" name="Nat. Biotechnol.">
        <title>The genome sequence of the anaerobic, sulfate-reducing bacterium Desulfovibrio vulgaris Hildenborough.</title>
        <authorList>
            <person name="Heidelberg J.F."/>
            <person name="Seshadri R."/>
            <person name="Haveman S.A."/>
            <person name="Hemme C.L."/>
            <person name="Paulsen I.T."/>
            <person name="Kolonay J.F."/>
            <person name="Eisen J.A."/>
            <person name="Ward N.L."/>
            <person name="Methe B.A."/>
            <person name="Brinkac L.M."/>
            <person name="Daugherty S.C."/>
            <person name="DeBoy R.T."/>
            <person name="Dodson R.J."/>
            <person name="Durkin A.S."/>
            <person name="Madupu R."/>
            <person name="Nelson W.C."/>
            <person name="Sullivan S.A."/>
            <person name="Fouts D.E."/>
            <person name="Haft D.H."/>
            <person name="Selengut J."/>
            <person name="Peterson J.D."/>
            <person name="Davidsen T.M."/>
            <person name="Zafar N."/>
            <person name="Zhou L."/>
            <person name="Radune D."/>
            <person name="Dimitrov G."/>
            <person name="Hance M."/>
            <person name="Tran K."/>
            <person name="Khouri H.M."/>
            <person name="Gill J."/>
            <person name="Utterback T.R."/>
            <person name="Feldblyum T.V."/>
            <person name="Wall J.D."/>
            <person name="Voordouw G."/>
            <person name="Fraser C.M."/>
        </authorList>
    </citation>
    <scope>NUCLEOTIDE SEQUENCE [LARGE SCALE GENOMIC DNA]</scope>
    <source>
        <strain>ATCC 29579 / DSM 644 / CCUG 34227 / NCIMB 8303 / VKM B-1760 / Hildenborough</strain>
    </source>
</reference>
<dbReference type="EC" id="5.1.1.1" evidence="1"/>
<dbReference type="EMBL" id="AE017285">
    <property type="protein sequence ID" value="AAS95435.1"/>
    <property type="molecule type" value="Genomic_DNA"/>
</dbReference>
<dbReference type="RefSeq" id="WP_010938254.1">
    <property type="nucleotide sequence ID" value="NC_002937.3"/>
</dbReference>
<dbReference type="RefSeq" id="YP_010176.1">
    <property type="nucleotide sequence ID" value="NC_002937.3"/>
</dbReference>
<dbReference type="SMR" id="Q72DH4"/>
<dbReference type="STRING" id="882.DVU_0955"/>
<dbReference type="PaxDb" id="882-DVU_0955"/>
<dbReference type="EnsemblBacteria" id="AAS95435">
    <property type="protein sequence ID" value="AAS95435"/>
    <property type="gene ID" value="DVU_0955"/>
</dbReference>
<dbReference type="KEGG" id="dvu:DVU_0955"/>
<dbReference type="PATRIC" id="fig|882.5.peg.899"/>
<dbReference type="eggNOG" id="COG0787">
    <property type="taxonomic scope" value="Bacteria"/>
</dbReference>
<dbReference type="HOGENOM" id="CLU_028393_2_2_7"/>
<dbReference type="OrthoDB" id="9813814at2"/>
<dbReference type="PhylomeDB" id="Q72DH4"/>
<dbReference type="UniPathway" id="UPA00042">
    <property type="reaction ID" value="UER00497"/>
</dbReference>
<dbReference type="Proteomes" id="UP000002194">
    <property type="component" value="Chromosome"/>
</dbReference>
<dbReference type="GO" id="GO:0005829">
    <property type="term" value="C:cytosol"/>
    <property type="evidence" value="ECO:0007669"/>
    <property type="project" value="TreeGrafter"/>
</dbReference>
<dbReference type="GO" id="GO:0008784">
    <property type="term" value="F:alanine racemase activity"/>
    <property type="evidence" value="ECO:0007669"/>
    <property type="project" value="UniProtKB-UniRule"/>
</dbReference>
<dbReference type="GO" id="GO:0030170">
    <property type="term" value="F:pyridoxal phosphate binding"/>
    <property type="evidence" value="ECO:0007669"/>
    <property type="project" value="UniProtKB-UniRule"/>
</dbReference>
<dbReference type="GO" id="GO:0030632">
    <property type="term" value="P:D-alanine biosynthetic process"/>
    <property type="evidence" value="ECO:0007669"/>
    <property type="project" value="UniProtKB-UniRule"/>
</dbReference>
<dbReference type="CDD" id="cd00430">
    <property type="entry name" value="PLPDE_III_AR"/>
    <property type="match status" value="1"/>
</dbReference>
<dbReference type="Gene3D" id="3.20.20.10">
    <property type="entry name" value="Alanine racemase"/>
    <property type="match status" value="1"/>
</dbReference>
<dbReference type="Gene3D" id="2.40.37.10">
    <property type="entry name" value="Lyase, Ornithine Decarboxylase, Chain A, domain 1"/>
    <property type="match status" value="1"/>
</dbReference>
<dbReference type="HAMAP" id="MF_01201">
    <property type="entry name" value="Ala_racemase"/>
    <property type="match status" value="1"/>
</dbReference>
<dbReference type="InterPro" id="IPR000821">
    <property type="entry name" value="Ala_racemase"/>
</dbReference>
<dbReference type="InterPro" id="IPR009006">
    <property type="entry name" value="Ala_racemase/Decarboxylase_C"/>
</dbReference>
<dbReference type="InterPro" id="IPR011079">
    <property type="entry name" value="Ala_racemase_C"/>
</dbReference>
<dbReference type="InterPro" id="IPR001608">
    <property type="entry name" value="Ala_racemase_N"/>
</dbReference>
<dbReference type="InterPro" id="IPR020622">
    <property type="entry name" value="Ala_racemase_pyridoxalP-BS"/>
</dbReference>
<dbReference type="InterPro" id="IPR029066">
    <property type="entry name" value="PLP-binding_barrel"/>
</dbReference>
<dbReference type="NCBIfam" id="TIGR00492">
    <property type="entry name" value="alr"/>
    <property type="match status" value="1"/>
</dbReference>
<dbReference type="PANTHER" id="PTHR30511">
    <property type="entry name" value="ALANINE RACEMASE"/>
    <property type="match status" value="1"/>
</dbReference>
<dbReference type="PANTHER" id="PTHR30511:SF0">
    <property type="entry name" value="ALANINE RACEMASE, CATABOLIC-RELATED"/>
    <property type="match status" value="1"/>
</dbReference>
<dbReference type="Pfam" id="PF00842">
    <property type="entry name" value="Ala_racemase_C"/>
    <property type="match status" value="1"/>
</dbReference>
<dbReference type="Pfam" id="PF01168">
    <property type="entry name" value="Ala_racemase_N"/>
    <property type="match status" value="1"/>
</dbReference>
<dbReference type="PRINTS" id="PR00992">
    <property type="entry name" value="ALARACEMASE"/>
</dbReference>
<dbReference type="SMART" id="SM01005">
    <property type="entry name" value="Ala_racemase_C"/>
    <property type="match status" value="1"/>
</dbReference>
<dbReference type="SUPFAM" id="SSF50621">
    <property type="entry name" value="Alanine racemase C-terminal domain-like"/>
    <property type="match status" value="1"/>
</dbReference>
<dbReference type="SUPFAM" id="SSF51419">
    <property type="entry name" value="PLP-binding barrel"/>
    <property type="match status" value="1"/>
</dbReference>
<dbReference type="PROSITE" id="PS00395">
    <property type="entry name" value="ALANINE_RACEMASE"/>
    <property type="match status" value="1"/>
</dbReference>
<gene>
    <name type="primary">alr</name>
    <name type="ordered locus">DVU_0955</name>
</gene>
<organism>
    <name type="scientific">Nitratidesulfovibrio vulgaris (strain ATCC 29579 / DSM 644 / CCUG 34227 / NCIMB 8303 / VKM B-1760 / Hildenborough)</name>
    <name type="common">Desulfovibrio vulgaris</name>
    <dbReference type="NCBI Taxonomy" id="882"/>
    <lineage>
        <taxon>Bacteria</taxon>
        <taxon>Pseudomonadati</taxon>
        <taxon>Thermodesulfobacteriota</taxon>
        <taxon>Desulfovibrionia</taxon>
        <taxon>Desulfovibrionales</taxon>
        <taxon>Desulfovibrionaceae</taxon>
        <taxon>Nitratidesulfovibrio</taxon>
    </lineage>
</organism>
<proteinExistence type="inferred from homology"/>
<name>ALR_NITV2</name>
<comment type="function">
    <text evidence="1">Catalyzes the interconversion of L-alanine and D-alanine. May also act on other amino acids.</text>
</comment>
<comment type="catalytic activity">
    <reaction evidence="1">
        <text>L-alanine = D-alanine</text>
        <dbReference type="Rhea" id="RHEA:20249"/>
        <dbReference type="ChEBI" id="CHEBI:57416"/>
        <dbReference type="ChEBI" id="CHEBI:57972"/>
        <dbReference type="EC" id="5.1.1.1"/>
    </reaction>
</comment>
<comment type="cofactor">
    <cofactor evidence="1">
        <name>pyridoxal 5'-phosphate</name>
        <dbReference type="ChEBI" id="CHEBI:597326"/>
    </cofactor>
</comment>
<comment type="pathway">
    <text evidence="1">Amino-acid biosynthesis; D-alanine biosynthesis; D-alanine from L-alanine: step 1/1.</text>
</comment>
<comment type="similarity">
    <text evidence="1">Belongs to the alanine racemase family.</text>
</comment>
<protein>
    <recommendedName>
        <fullName evidence="1">Alanine racemase</fullName>
        <ecNumber evidence="1">5.1.1.1</ecNumber>
    </recommendedName>
</protein>